<sequence>MATIAQLIRKPRRHKVKKSKSPALQVNLNTLEKKVTSKSSPFKRGVCTRVGTMTPKKPNSALRKYAKVKLTNGMEVLAYIPGEGHNLQEHSVVLIRGGRVKDLPGVRYHIVRGTLDTTGVDKRRQQRSAYGAKRPKADKKK</sequence>
<reference key="1">
    <citation type="journal article" date="2003" name="Microbiology">
        <title>The complete genome sequence of the avian pathogen Mycoplasma gallisepticum strain R(low).</title>
        <authorList>
            <person name="Papazisi L."/>
            <person name="Gorton T.S."/>
            <person name="Kutish G."/>
            <person name="Markham P.F."/>
            <person name="Browning G.F."/>
            <person name="Nguyen D.K."/>
            <person name="Swartzell S."/>
            <person name="Madan A."/>
            <person name="Mahairas G."/>
            <person name="Geary S.J."/>
        </authorList>
    </citation>
    <scope>NUCLEOTIDE SEQUENCE [LARGE SCALE GENOMIC DNA]</scope>
    <source>
        <strain>R(low / passage 15 / clone 2)</strain>
    </source>
</reference>
<keyword id="KW-1185">Reference proteome</keyword>
<keyword id="KW-0687">Ribonucleoprotein</keyword>
<keyword id="KW-0689">Ribosomal protein</keyword>
<keyword id="KW-0694">RNA-binding</keyword>
<keyword id="KW-0699">rRNA-binding</keyword>
<keyword id="KW-0820">tRNA-binding</keyword>
<organism>
    <name type="scientific">Mycoplasmoides gallisepticum (strain R(low / passage 15 / clone 2))</name>
    <name type="common">Mycoplasma gallisepticum</name>
    <dbReference type="NCBI Taxonomy" id="710127"/>
    <lineage>
        <taxon>Bacteria</taxon>
        <taxon>Bacillati</taxon>
        <taxon>Mycoplasmatota</taxon>
        <taxon>Mycoplasmoidales</taxon>
        <taxon>Mycoplasmoidaceae</taxon>
        <taxon>Mycoplasmoides</taxon>
    </lineage>
</organism>
<comment type="function">
    <text evidence="1">With S4 and S5 plays an important role in translational accuracy.</text>
</comment>
<comment type="function">
    <text evidence="1">Interacts with and stabilizes bases of the 16S rRNA that are involved in tRNA selection in the A site and with the mRNA backbone. Located at the interface of the 30S and 50S subunits, it traverses the body of the 30S subunit contacting proteins on the other side and probably holding the rRNA structure together. The combined cluster of proteins S8, S12 and S17 appears to hold together the shoulder and platform of the 30S subunit.</text>
</comment>
<comment type="subunit">
    <text evidence="1">Part of the 30S ribosomal subunit. Contacts proteins S8 and S17. May interact with IF1 in the 30S initiation complex.</text>
</comment>
<comment type="similarity">
    <text evidence="1">Belongs to the universal ribosomal protein uS12 family.</text>
</comment>
<comment type="caution">
    <text evidence="3">Because the enzyme that would modify Asp-102 to 3-methylthioaspartic acid has not been found in the proteome of this organism, that modification is not predicted.</text>
</comment>
<gene>
    <name evidence="1" type="primary">rpsL</name>
    <name evidence="1" type="synonym">rps12</name>
    <name type="ordered locus">MYCGA5340</name>
    <name type="ORF">MGA_0262</name>
</gene>
<evidence type="ECO:0000255" key="1">
    <source>
        <dbReference type="HAMAP-Rule" id="MF_00403"/>
    </source>
</evidence>
<evidence type="ECO:0000256" key="2">
    <source>
        <dbReference type="SAM" id="MobiDB-lite"/>
    </source>
</evidence>
<evidence type="ECO:0000305" key="3"/>
<dbReference type="EMBL" id="AE015450">
    <property type="protein sequence ID" value="AAP56884.2"/>
    <property type="molecule type" value="Genomic_DNA"/>
</dbReference>
<dbReference type="RefSeq" id="WP_011113788.1">
    <property type="nucleotide sequence ID" value="NC_004829.2"/>
</dbReference>
<dbReference type="SMR" id="Q7NAV1"/>
<dbReference type="GeneID" id="93510368"/>
<dbReference type="KEGG" id="mga:MGA_0262"/>
<dbReference type="HOGENOM" id="CLU_104295_1_2_14"/>
<dbReference type="OrthoDB" id="9802366at2"/>
<dbReference type="Proteomes" id="UP000001418">
    <property type="component" value="Chromosome"/>
</dbReference>
<dbReference type="GO" id="GO:0015935">
    <property type="term" value="C:small ribosomal subunit"/>
    <property type="evidence" value="ECO:0007669"/>
    <property type="project" value="InterPro"/>
</dbReference>
<dbReference type="GO" id="GO:0019843">
    <property type="term" value="F:rRNA binding"/>
    <property type="evidence" value="ECO:0007669"/>
    <property type="project" value="UniProtKB-UniRule"/>
</dbReference>
<dbReference type="GO" id="GO:0003735">
    <property type="term" value="F:structural constituent of ribosome"/>
    <property type="evidence" value="ECO:0007669"/>
    <property type="project" value="InterPro"/>
</dbReference>
<dbReference type="GO" id="GO:0000049">
    <property type="term" value="F:tRNA binding"/>
    <property type="evidence" value="ECO:0007669"/>
    <property type="project" value="UniProtKB-UniRule"/>
</dbReference>
<dbReference type="GO" id="GO:0006412">
    <property type="term" value="P:translation"/>
    <property type="evidence" value="ECO:0007669"/>
    <property type="project" value="UniProtKB-UniRule"/>
</dbReference>
<dbReference type="CDD" id="cd03368">
    <property type="entry name" value="Ribosomal_S12"/>
    <property type="match status" value="1"/>
</dbReference>
<dbReference type="FunFam" id="2.40.50.140:FF:000001">
    <property type="entry name" value="30S ribosomal protein S12"/>
    <property type="match status" value="1"/>
</dbReference>
<dbReference type="Gene3D" id="2.40.50.140">
    <property type="entry name" value="Nucleic acid-binding proteins"/>
    <property type="match status" value="1"/>
</dbReference>
<dbReference type="HAMAP" id="MF_00403_B">
    <property type="entry name" value="Ribosomal_uS12_B"/>
    <property type="match status" value="1"/>
</dbReference>
<dbReference type="InterPro" id="IPR012340">
    <property type="entry name" value="NA-bd_OB-fold"/>
</dbReference>
<dbReference type="InterPro" id="IPR006032">
    <property type="entry name" value="Ribosomal_uS12"/>
</dbReference>
<dbReference type="InterPro" id="IPR005679">
    <property type="entry name" value="Ribosomal_uS12_bac"/>
</dbReference>
<dbReference type="NCBIfam" id="TIGR00981">
    <property type="entry name" value="rpsL_bact"/>
    <property type="match status" value="1"/>
</dbReference>
<dbReference type="PANTHER" id="PTHR11652">
    <property type="entry name" value="30S RIBOSOMAL PROTEIN S12 FAMILY MEMBER"/>
    <property type="match status" value="1"/>
</dbReference>
<dbReference type="Pfam" id="PF00164">
    <property type="entry name" value="Ribosom_S12_S23"/>
    <property type="match status" value="1"/>
</dbReference>
<dbReference type="PIRSF" id="PIRSF002133">
    <property type="entry name" value="Ribosomal_S12/S23"/>
    <property type="match status" value="1"/>
</dbReference>
<dbReference type="PRINTS" id="PR01034">
    <property type="entry name" value="RIBOSOMALS12"/>
</dbReference>
<dbReference type="SUPFAM" id="SSF50249">
    <property type="entry name" value="Nucleic acid-binding proteins"/>
    <property type="match status" value="1"/>
</dbReference>
<dbReference type="PROSITE" id="PS00055">
    <property type="entry name" value="RIBOSOMAL_S12"/>
    <property type="match status" value="1"/>
</dbReference>
<accession>Q7NAV1</accession>
<protein>
    <recommendedName>
        <fullName evidence="1">Small ribosomal subunit protein uS12</fullName>
    </recommendedName>
    <alternativeName>
        <fullName evidence="3">30S ribosomal protein S12</fullName>
    </alternativeName>
</protein>
<name>RS12_MYCGA</name>
<proteinExistence type="inferred from homology"/>
<feature type="chain" id="PRO_0000146258" description="Small ribosomal subunit protein uS12">
    <location>
        <begin position="1"/>
        <end position="141"/>
    </location>
</feature>
<feature type="region of interest" description="Disordered" evidence="2">
    <location>
        <begin position="118"/>
        <end position="141"/>
    </location>
</feature>